<sequence length="177" mass="19149">MAELTTIARPYAKAAFDVAVEHNAVDTWAEMLTFAALVSENETMQPLLTGSLASTKLAALFISVCGEQINEQGQNLIKVMAENGRLKVLPAVSELFAQYRNEWAKEVEADVVSAAELSSEQQQQISNSLEKRLARKVKLNCSTDAALIAGVIIKAGDLVIDGSVRGKLSRLSEKLQS</sequence>
<protein>
    <recommendedName>
        <fullName evidence="1">ATP synthase subunit delta</fullName>
    </recommendedName>
    <alternativeName>
        <fullName evidence="1">ATP synthase F(1) sector subunit delta</fullName>
    </alternativeName>
    <alternativeName>
        <fullName evidence="1">F-type ATPase subunit delta</fullName>
        <shortName evidence="1">F-ATPase subunit delta</shortName>
    </alternativeName>
</protein>
<dbReference type="EMBL" id="CP000469">
    <property type="protein sequence ID" value="ABK50350.1"/>
    <property type="molecule type" value="Genomic_DNA"/>
</dbReference>
<dbReference type="RefSeq" id="WP_011718835.1">
    <property type="nucleotide sequence ID" value="NC_008577.1"/>
</dbReference>
<dbReference type="SMR" id="A0L2T1"/>
<dbReference type="STRING" id="94122.Shewana3_4133"/>
<dbReference type="GeneID" id="94725961"/>
<dbReference type="KEGG" id="shn:Shewana3_4133"/>
<dbReference type="eggNOG" id="COG0712">
    <property type="taxonomic scope" value="Bacteria"/>
</dbReference>
<dbReference type="HOGENOM" id="CLU_085114_3_0_6"/>
<dbReference type="OrthoDB" id="9816221at2"/>
<dbReference type="Proteomes" id="UP000002589">
    <property type="component" value="Chromosome"/>
</dbReference>
<dbReference type="GO" id="GO:0005886">
    <property type="term" value="C:plasma membrane"/>
    <property type="evidence" value="ECO:0007669"/>
    <property type="project" value="UniProtKB-SubCell"/>
</dbReference>
<dbReference type="GO" id="GO:0045259">
    <property type="term" value="C:proton-transporting ATP synthase complex"/>
    <property type="evidence" value="ECO:0007669"/>
    <property type="project" value="UniProtKB-KW"/>
</dbReference>
<dbReference type="GO" id="GO:0046933">
    <property type="term" value="F:proton-transporting ATP synthase activity, rotational mechanism"/>
    <property type="evidence" value="ECO:0007669"/>
    <property type="project" value="UniProtKB-UniRule"/>
</dbReference>
<dbReference type="Gene3D" id="1.10.520.20">
    <property type="entry name" value="N-terminal domain of the delta subunit of the F1F0-ATP synthase"/>
    <property type="match status" value="1"/>
</dbReference>
<dbReference type="HAMAP" id="MF_01416">
    <property type="entry name" value="ATP_synth_delta_bact"/>
    <property type="match status" value="1"/>
</dbReference>
<dbReference type="InterPro" id="IPR026015">
    <property type="entry name" value="ATP_synth_OSCP/delta_N_sf"/>
</dbReference>
<dbReference type="InterPro" id="IPR020781">
    <property type="entry name" value="ATPase_OSCP/d_CS"/>
</dbReference>
<dbReference type="InterPro" id="IPR000711">
    <property type="entry name" value="ATPase_OSCP/dsu"/>
</dbReference>
<dbReference type="NCBIfam" id="TIGR01145">
    <property type="entry name" value="ATP_synt_delta"/>
    <property type="match status" value="1"/>
</dbReference>
<dbReference type="NCBIfam" id="NF004402">
    <property type="entry name" value="PRK05758.2-2"/>
    <property type="match status" value="1"/>
</dbReference>
<dbReference type="NCBIfam" id="NF004404">
    <property type="entry name" value="PRK05758.2-5"/>
    <property type="match status" value="1"/>
</dbReference>
<dbReference type="PANTHER" id="PTHR11910">
    <property type="entry name" value="ATP SYNTHASE DELTA CHAIN"/>
    <property type="match status" value="1"/>
</dbReference>
<dbReference type="Pfam" id="PF00213">
    <property type="entry name" value="OSCP"/>
    <property type="match status" value="1"/>
</dbReference>
<dbReference type="PRINTS" id="PR00125">
    <property type="entry name" value="ATPASEDELTA"/>
</dbReference>
<dbReference type="SUPFAM" id="SSF47928">
    <property type="entry name" value="N-terminal domain of the delta subunit of the F1F0-ATP synthase"/>
    <property type="match status" value="1"/>
</dbReference>
<dbReference type="PROSITE" id="PS00389">
    <property type="entry name" value="ATPASE_DELTA"/>
    <property type="match status" value="1"/>
</dbReference>
<feature type="chain" id="PRO_0000371133" description="ATP synthase subunit delta">
    <location>
        <begin position="1"/>
        <end position="177"/>
    </location>
</feature>
<accession>A0L2T1</accession>
<keyword id="KW-0066">ATP synthesis</keyword>
<keyword id="KW-0997">Cell inner membrane</keyword>
<keyword id="KW-1003">Cell membrane</keyword>
<keyword id="KW-0139">CF(1)</keyword>
<keyword id="KW-0375">Hydrogen ion transport</keyword>
<keyword id="KW-0406">Ion transport</keyword>
<keyword id="KW-0472">Membrane</keyword>
<keyword id="KW-0813">Transport</keyword>
<comment type="function">
    <text evidence="1">F(1)F(0) ATP synthase produces ATP from ADP in the presence of a proton or sodium gradient. F-type ATPases consist of two structural domains, F(1) containing the extramembraneous catalytic core and F(0) containing the membrane proton channel, linked together by a central stalk and a peripheral stalk. During catalysis, ATP synthesis in the catalytic domain of F(1) is coupled via a rotary mechanism of the central stalk subunits to proton translocation.</text>
</comment>
<comment type="function">
    <text evidence="1">This protein is part of the stalk that links CF(0) to CF(1). It either transmits conformational changes from CF(0) to CF(1) or is implicated in proton conduction.</text>
</comment>
<comment type="subunit">
    <text evidence="1">F-type ATPases have 2 components, F(1) - the catalytic core - and F(0) - the membrane proton channel. F(1) has five subunits: alpha(3), beta(3), gamma(1), delta(1), epsilon(1). F(0) has three main subunits: a(1), b(2) and c(10-14). The alpha and beta chains form an alternating ring which encloses part of the gamma chain. F(1) is attached to F(0) by a central stalk formed by the gamma and epsilon chains, while a peripheral stalk is formed by the delta and b chains.</text>
</comment>
<comment type="subcellular location">
    <subcellularLocation>
        <location evidence="1">Cell inner membrane</location>
        <topology evidence="1">Peripheral membrane protein</topology>
    </subcellularLocation>
</comment>
<comment type="similarity">
    <text evidence="1">Belongs to the ATPase delta chain family.</text>
</comment>
<reference key="1">
    <citation type="submission" date="2006-09" db="EMBL/GenBank/DDBJ databases">
        <title>Complete sequence of chromosome 1 of Shewanella sp. ANA-3.</title>
        <authorList>
            <person name="Copeland A."/>
            <person name="Lucas S."/>
            <person name="Lapidus A."/>
            <person name="Barry K."/>
            <person name="Detter J.C."/>
            <person name="Glavina del Rio T."/>
            <person name="Hammon N."/>
            <person name="Israni S."/>
            <person name="Dalin E."/>
            <person name="Tice H."/>
            <person name="Pitluck S."/>
            <person name="Chertkov O."/>
            <person name="Brettin T."/>
            <person name="Bruce D."/>
            <person name="Han C."/>
            <person name="Tapia R."/>
            <person name="Gilna P."/>
            <person name="Schmutz J."/>
            <person name="Larimer F."/>
            <person name="Land M."/>
            <person name="Hauser L."/>
            <person name="Kyrpides N."/>
            <person name="Kim E."/>
            <person name="Newman D."/>
            <person name="Salticov C."/>
            <person name="Konstantinidis K."/>
            <person name="Klappenback J."/>
            <person name="Tiedje J."/>
            <person name="Richardson P."/>
        </authorList>
    </citation>
    <scope>NUCLEOTIDE SEQUENCE [LARGE SCALE GENOMIC DNA]</scope>
    <source>
        <strain>ANA-3</strain>
    </source>
</reference>
<gene>
    <name evidence="1" type="primary">atpH</name>
    <name type="ordered locus">Shewana3_4133</name>
</gene>
<organism>
    <name type="scientific">Shewanella sp. (strain ANA-3)</name>
    <dbReference type="NCBI Taxonomy" id="94122"/>
    <lineage>
        <taxon>Bacteria</taxon>
        <taxon>Pseudomonadati</taxon>
        <taxon>Pseudomonadota</taxon>
        <taxon>Gammaproteobacteria</taxon>
        <taxon>Alteromonadales</taxon>
        <taxon>Shewanellaceae</taxon>
        <taxon>Shewanella</taxon>
    </lineage>
</organism>
<proteinExistence type="inferred from homology"/>
<evidence type="ECO:0000255" key="1">
    <source>
        <dbReference type="HAMAP-Rule" id="MF_01416"/>
    </source>
</evidence>
<name>ATPD_SHESA</name>